<protein>
    <recommendedName>
        <fullName evidence="1">Macrolide export ATP-binding/permease protein MacB 2</fullName>
        <ecNumber evidence="1">7.6.2.-</ecNumber>
    </recommendedName>
</protein>
<comment type="function">
    <text evidence="1">Part of the tripartite efflux system MacAB-TolC. MacB is a non-canonical ABC transporter that contains transmembrane domains (TMD), which form a pore in the inner membrane, and an ATP-binding domain (NBD), which is responsible for energy generation. Confers resistance against macrolides.</text>
</comment>
<comment type="subunit">
    <text evidence="1">Homodimer. Part of the tripartite efflux system MacAB-TolC, which is composed of an inner membrane transporter, MacB, a periplasmic membrane fusion protein, MacA, and an outer membrane component, TolC. The complex forms a large protein conduit and can translocate molecules across both the inner and outer membranes. Interacts with MacA.</text>
</comment>
<comment type="subcellular location">
    <subcellularLocation>
        <location evidence="1">Cell inner membrane</location>
        <topology evidence="1">Multi-pass membrane protein</topology>
    </subcellularLocation>
</comment>
<comment type="similarity">
    <text evidence="1">Belongs to the ABC transporter superfamily. Macrolide exporter (TC 3.A.1.122) family.</text>
</comment>
<keyword id="KW-0046">Antibiotic resistance</keyword>
<keyword id="KW-0067">ATP-binding</keyword>
<keyword id="KW-0997">Cell inner membrane</keyword>
<keyword id="KW-1003">Cell membrane</keyword>
<keyword id="KW-0472">Membrane</keyword>
<keyword id="KW-0547">Nucleotide-binding</keyword>
<keyword id="KW-1185">Reference proteome</keyword>
<keyword id="KW-1278">Translocase</keyword>
<keyword id="KW-0812">Transmembrane</keyword>
<keyword id="KW-1133">Transmembrane helix</keyword>
<keyword id="KW-0813">Transport</keyword>
<evidence type="ECO:0000255" key="1">
    <source>
        <dbReference type="HAMAP-Rule" id="MF_01720"/>
    </source>
</evidence>
<sequence>MTGPQQGKILLRLENVSREFITGEQTVRVLNNINLTLHSGEMVAIVGTSGSGKSTLMNILGCLDKPSAGEYWVAGRIPQYLGSDALAELRREHFGFIFQRYHLLNDLSARENVEIPAIYAGIDREERRKRAVNLLSRIGLAERLDYRPSQLSGGQQQRVSIARALMNGGDVILADEPTGALDTHSGNEVLNILKDLHQQGHTVVIVTHDMSIAEHAQRIIELKDGEIIADRPRDHAQEKPKMVDIPSVIDIPSMDEKISTGAQQETEIARKPLLTRWKVQYDRLHEAFKMAILAMAAQRLRTALTMLGIIIGIASVVSVVALGKGSQQQVLANINAMGTSTLEIFPGKDFGDMRSAAIHTLRDTDADVLAQQGYIHSVTPTVSTSVTLRYGNKSVSGTVNGVGEQYFLVRGYTIAQGMAFTRTSVNDLMQDAVIDENTRDKLFPNGETPLGKVILLGSLPCRVIGVAAKKQSGFGSDENLNVWIPYTTAMKRMLGQSYLKSITVRVNDDIDLANAEQGVIKLLSQRHGTQDFFVMNTDSIRQTIQATTSTMTLLVSMIAVISLIVGGIGVMNIMLVSVTERTKEIGVRMAVGARASDIMQQFLIEAVLVCLLGGSLGVALSLGIGLLFSLFSSNFSMVYSAASIITAFVCSSLIGVIFGFFPAKRAAEMDPIRALERE</sequence>
<gene>
    <name evidence="1" type="primary">macB2</name>
    <name type="ordered locus">YPO3000</name>
    <name type="ordered locus">y1480</name>
    <name type="ordered locus">YP_2625</name>
</gene>
<reference key="1">
    <citation type="journal article" date="2002" name="J. Bacteriol.">
        <title>Genome sequence of Yersinia pestis KIM.</title>
        <authorList>
            <person name="Deng W."/>
            <person name="Burland V."/>
            <person name="Plunkett G. III"/>
            <person name="Boutin A."/>
            <person name="Mayhew G.F."/>
            <person name="Liss P."/>
            <person name="Perna N.T."/>
            <person name="Rose D.J."/>
            <person name="Mau B."/>
            <person name="Zhou S."/>
            <person name="Schwartz D.C."/>
            <person name="Fetherston J.D."/>
            <person name="Lindler L.E."/>
            <person name="Brubaker R.R."/>
            <person name="Plano G.V."/>
            <person name="Straley S.C."/>
            <person name="McDonough K.A."/>
            <person name="Nilles M.L."/>
            <person name="Matson J.S."/>
            <person name="Blattner F.R."/>
            <person name="Perry R.D."/>
        </authorList>
    </citation>
    <scope>NUCLEOTIDE SEQUENCE [LARGE SCALE GENOMIC DNA]</scope>
    <source>
        <strain>KIM10+ / Biovar Mediaevalis</strain>
    </source>
</reference>
<reference key="2">
    <citation type="journal article" date="2001" name="Nature">
        <title>Genome sequence of Yersinia pestis, the causative agent of plague.</title>
        <authorList>
            <person name="Parkhill J."/>
            <person name="Wren B.W."/>
            <person name="Thomson N.R."/>
            <person name="Titball R.W."/>
            <person name="Holden M.T.G."/>
            <person name="Prentice M.B."/>
            <person name="Sebaihia M."/>
            <person name="James K.D."/>
            <person name="Churcher C.M."/>
            <person name="Mungall K.L."/>
            <person name="Baker S."/>
            <person name="Basham D."/>
            <person name="Bentley S.D."/>
            <person name="Brooks K."/>
            <person name="Cerdeno-Tarraga A.-M."/>
            <person name="Chillingworth T."/>
            <person name="Cronin A."/>
            <person name="Davies R.M."/>
            <person name="Davis P."/>
            <person name="Dougan G."/>
            <person name="Feltwell T."/>
            <person name="Hamlin N."/>
            <person name="Holroyd S."/>
            <person name="Jagels K."/>
            <person name="Karlyshev A.V."/>
            <person name="Leather S."/>
            <person name="Moule S."/>
            <person name="Oyston P.C.F."/>
            <person name="Quail M.A."/>
            <person name="Rutherford K.M."/>
            <person name="Simmonds M."/>
            <person name="Skelton J."/>
            <person name="Stevens K."/>
            <person name="Whitehead S."/>
            <person name="Barrell B.G."/>
        </authorList>
    </citation>
    <scope>NUCLEOTIDE SEQUENCE [LARGE SCALE GENOMIC DNA]</scope>
    <source>
        <strain>CO-92 / Biovar Orientalis</strain>
    </source>
</reference>
<reference key="3">
    <citation type="journal article" date="2004" name="DNA Res.">
        <title>Complete genome sequence of Yersinia pestis strain 91001, an isolate avirulent to humans.</title>
        <authorList>
            <person name="Song Y."/>
            <person name="Tong Z."/>
            <person name="Wang J."/>
            <person name="Wang L."/>
            <person name="Guo Z."/>
            <person name="Han Y."/>
            <person name="Zhang J."/>
            <person name="Pei D."/>
            <person name="Zhou D."/>
            <person name="Qin H."/>
            <person name="Pang X."/>
            <person name="Han Y."/>
            <person name="Zhai J."/>
            <person name="Li M."/>
            <person name="Cui B."/>
            <person name="Qi Z."/>
            <person name="Jin L."/>
            <person name="Dai R."/>
            <person name="Chen F."/>
            <person name="Li S."/>
            <person name="Ye C."/>
            <person name="Du Z."/>
            <person name="Lin W."/>
            <person name="Wang J."/>
            <person name="Yu J."/>
            <person name="Yang H."/>
            <person name="Wang J."/>
            <person name="Huang P."/>
            <person name="Yang R."/>
        </authorList>
    </citation>
    <scope>NUCLEOTIDE SEQUENCE [LARGE SCALE GENOMIC DNA]</scope>
    <source>
        <strain>91001 / Biovar Mediaevalis</strain>
    </source>
</reference>
<dbReference type="EC" id="7.6.2.-" evidence="1"/>
<dbReference type="EMBL" id="AE009952">
    <property type="protein sequence ID" value="AAM85051.1"/>
    <property type="molecule type" value="Genomic_DNA"/>
</dbReference>
<dbReference type="EMBL" id="AL590842">
    <property type="protein sequence ID" value="CAL21604.1"/>
    <property type="molecule type" value="Genomic_DNA"/>
</dbReference>
<dbReference type="EMBL" id="AE017042">
    <property type="protein sequence ID" value="AAS62818.1"/>
    <property type="molecule type" value="Genomic_DNA"/>
</dbReference>
<dbReference type="PIR" id="AI0364">
    <property type="entry name" value="AI0364"/>
</dbReference>
<dbReference type="RefSeq" id="WP_002208496.1">
    <property type="nucleotide sequence ID" value="NZ_WUCM01000010.1"/>
</dbReference>
<dbReference type="RefSeq" id="YP_002347924.1">
    <property type="nucleotide sequence ID" value="NC_003143.1"/>
</dbReference>
<dbReference type="SMR" id="Q7CJG3"/>
<dbReference type="IntAct" id="Q7CJG3">
    <property type="interactions" value="3"/>
</dbReference>
<dbReference type="STRING" id="214092.YPO3000"/>
<dbReference type="PaxDb" id="214092-YPO3000"/>
<dbReference type="DNASU" id="1146427"/>
<dbReference type="EnsemblBacteria" id="AAS62818">
    <property type="protein sequence ID" value="AAS62818"/>
    <property type="gene ID" value="YP_2625"/>
</dbReference>
<dbReference type="KEGG" id="ype:YPO3000"/>
<dbReference type="KEGG" id="ypk:y1480"/>
<dbReference type="KEGG" id="ypm:YP_2625"/>
<dbReference type="PATRIC" id="fig|214092.21.peg.3454"/>
<dbReference type="eggNOG" id="COG0577">
    <property type="taxonomic scope" value="Bacteria"/>
</dbReference>
<dbReference type="eggNOG" id="COG1136">
    <property type="taxonomic scope" value="Bacteria"/>
</dbReference>
<dbReference type="HOGENOM" id="CLU_000604_78_1_6"/>
<dbReference type="OMA" id="PAIYAGQ"/>
<dbReference type="OrthoDB" id="9770036at2"/>
<dbReference type="Proteomes" id="UP000000815">
    <property type="component" value="Chromosome"/>
</dbReference>
<dbReference type="Proteomes" id="UP000001019">
    <property type="component" value="Chromosome"/>
</dbReference>
<dbReference type="Proteomes" id="UP000002490">
    <property type="component" value="Chromosome"/>
</dbReference>
<dbReference type="GO" id="GO:0005886">
    <property type="term" value="C:plasma membrane"/>
    <property type="evidence" value="ECO:0000318"/>
    <property type="project" value="GO_Central"/>
</dbReference>
<dbReference type="GO" id="GO:0005524">
    <property type="term" value="F:ATP binding"/>
    <property type="evidence" value="ECO:0007669"/>
    <property type="project" value="UniProtKB-KW"/>
</dbReference>
<dbReference type="GO" id="GO:0016887">
    <property type="term" value="F:ATP hydrolysis activity"/>
    <property type="evidence" value="ECO:0007669"/>
    <property type="project" value="InterPro"/>
</dbReference>
<dbReference type="GO" id="GO:0022857">
    <property type="term" value="F:transmembrane transporter activity"/>
    <property type="evidence" value="ECO:0000318"/>
    <property type="project" value="GO_Central"/>
</dbReference>
<dbReference type="GO" id="GO:0046677">
    <property type="term" value="P:response to antibiotic"/>
    <property type="evidence" value="ECO:0007669"/>
    <property type="project" value="UniProtKB-KW"/>
</dbReference>
<dbReference type="CDD" id="cd03255">
    <property type="entry name" value="ABC_MJ0796_LolCDE_FtsE"/>
    <property type="match status" value="1"/>
</dbReference>
<dbReference type="FunFam" id="3.40.50.300:FF:000032">
    <property type="entry name" value="Export ABC transporter ATP-binding protein"/>
    <property type="match status" value="1"/>
</dbReference>
<dbReference type="Gene3D" id="3.40.50.300">
    <property type="entry name" value="P-loop containing nucleotide triphosphate hydrolases"/>
    <property type="match status" value="1"/>
</dbReference>
<dbReference type="InterPro" id="IPR003593">
    <property type="entry name" value="AAA+_ATPase"/>
</dbReference>
<dbReference type="InterPro" id="IPR003838">
    <property type="entry name" value="ABC3_permease_C"/>
</dbReference>
<dbReference type="InterPro" id="IPR003439">
    <property type="entry name" value="ABC_transporter-like_ATP-bd"/>
</dbReference>
<dbReference type="InterPro" id="IPR017871">
    <property type="entry name" value="ABC_transporter-like_CS"/>
</dbReference>
<dbReference type="InterPro" id="IPR017911">
    <property type="entry name" value="MacB-like_ATP-bd"/>
</dbReference>
<dbReference type="InterPro" id="IPR025857">
    <property type="entry name" value="MacB_PCD"/>
</dbReference>
<dbReference type="InterPro" id="IPR050250">
    <property type="entry name" value="Macrolide_Exporter_MacB"/>
</dbReference>
<dbReference type="InterPro" id="IPR027417">
    <property type="entry name" value="P-loop_NTPase"/>
</dbReference>
<dbReference type="PANTHER" id="PTHR30572:SF14">
    <property type="entry name" value="MACROLIDE EXPORT ATP-BINDING_PERMEASE PROTEIN MACB"/>
    <property type="match status" value="1"/>
</dbReference>
<dbReference type="PANTHER" id="PTHR30572">
    <property type="entry name" value="MEMBRANE COMPONENT OF TRANSPORTER-RELATED"/>
    <property type="match status" value="1"/>
</dbReference>
<dbReference type="Pfam" id="PF00005">
    <property type="entry name" value="ABC_tran"/>
    <property type="match status" value="1"/>
</dbReference>
<dbReference type="Pfam" id="PF02687">
    <property type="entry name" value="FtsX"/>
    <property type="match status" value="1"/>
</dbReference>
<dbReference type="Pfam" id="PF12704">
    <property type="entry name" value="MacB_PCD"/>
    <property type="match status" value="1"/>
</dbReference>
<dbReference type="SMART" id="SM00382">
    <property type="entry name" value="AAA"/>
    <property type="match status" value="1"/>
</dbReference>
<dbReference type="SUPFAM" id="SSF52540">
    <property type="entry name" value="P-loop containing nucleoside triphosphate hydrolases"/>
    <property type="match status" value="1"/>
</dbReference>
<dbReference type="PROSITE" id="PS00211">
    <property type="entry name" value="ABC_TRANSPORTER_1"/>
    <property type="match status" value="1"/>
</dbReference>
<dbReference type="PROSITE" id="PS50893">
    <property type="entry name" value="ABC_TRANSPORTER_2"/>
    <property type="match status" value="1"/>
</dbReference>
<dbReference type="PROSITE" id="PS51267">
    <property type="entry name" value="MACB"/>
    <property type="match status" value="1"/>
</dbReference>
<accession>Q7CJG3</accession>
<accession>Q74SH9</accession>
<name>MACB2_YERPE</name>
<proteinExistence type="inferred from homology"/>
<feature type="chain" id="PRO_0000269987" description="Macrolide export ATP-binding/permease protein MacB 2">
    <location>
        <begin position="1"/>
        <end position="678"/>
    </location>
</feature>
<feature type="transmembrane region" description="Helical" evidence="1">
    <location>
        <begin position="303"/>
        <end position="323"/>
    </location>
</feature>
<feature type="transmembrane region" description="Helical" evidence="1">
    <location>
        <begin position="558"/>
        <end position="578"/>
    </location>
</feature>
<feature type="transmembrane region" description="Helical" evidence="1">
    <location>
        <begin position="608"/>
        <end position="628"/>
    </location>
</feature>
<feature type="transmembrane region" description="Helical" evidence="1">
    <location>
        <begin position="641"/>
        <end position="661"/>
    </location>
</feature>
<feature type="domain" description="ABC transporter" evidence="1">
    <location>
        <begin position="11"/>
        <end position="249"/>
    </location>
</feature>
<feature type="binding site" evidence="1">
    <location>
        <begin position="47"/>
        <end position="54"/>
    </location>
    <ligand>
        <name>ATP</name>
        <dbReference type="ChEBI" id="CHEBI:30616"/>
    </ligand>
</feature>
<organism>
    <name type="scientific">Yersinia pestis</name>
    <dbReference type="NCBI Taxonomy" id="632"/>
    <lineage>
        <taxon>Bacteria</taxon>
        <taxon>Pseudomonadati</taxon>
        <taxon>Pseudomonadota</taxon>
        <taxon>Gammaproteobacteria</taxon>
        <taxon>Enterobacterales</taxon>
        <taxon>Yersiniaceae</taxon>
        <taxon>Yersinia</taxon>
    </lineage>
</organism>